<proteinExistence type="inferred from homology"/>
<evidence type="ECO:0000255" key="1">
    <source>
        <dbReference type="HAMAP-Rule" id="MF_00178"/>
    </source>
</evidence>
<keyword id="KW-0686">Riboflavin biosynthesis</keyword>
<keyword id="KW-0808">Transferase</keyword>
<comment type="function">
    <text evidence="1">Catalyzes the formation of 6,7-dimethyl-8-ribityllumazine by condensation of 5-amino-6-(D-ribitylamino)uracil with 3,4-dihydroxy-2-butanone 4-phosphate. This is the penultimate step in the biosynthesis of riboflavin.</text>
</comment>
<comment type="catalytic activity">
    <reaction evidence="1">
        <text>(2S)-2-hydroxy-3-oxobutyl phosphate + 5-amino-6-(D-ribitylamino)uracil = 6,7-dimethyl-8-(1-D-ribityl)lumazine + phosphate + 2 H2O + H(+)</text>
        <dbReference type="Rhea" id="RHEA:26152"/>
        <dbReference type="ChEBI" id="CHEBI:15377"/>
        <dbReference type="ChEBI" id="CHEBI:15378"/>
        <dbReference type="ChEBI" id="CHEBI:15934"/>
        <dbReference type="ChEBI" id="CHEBI:43474"/>
        <dbReference type="ChEBI" id="CHEBI:58201"/>
        <dbReference type="ChEBI" id="CHEBI:58830"/>
        <dbReference type="EC" id="2.5.1.78"/>
    </reaction>
</comment>
<comment type="pathway">
    <text evidence="1">Cofactor biosynthesis; riboflavin biosynthesis; riboflavin from 2-hydroxy-3-oxobutyl phosphate and 5-amino-6-(D-ribitylamino)uracil: step 1/2.</text>
</comment>
<comment type="similarity">
    <text evidence="1">Belongs to the DMRL synthase family.</text>
</comment>
<accession>P61728</accession>
<feature type="chain" id="PRO_0000134823" description="6,7-dimethyl-8-ribityllumazine synthase">
    <location>
        <begin position="1"/>
        <end position="157"/>
    </location>
</feature>
<feature type="active site" description="Proton donor" evidence="1">
    <location>
        <position position="90"/>
    </location>
</feature>
<feature type="binding site" evidence="1">
    <location>
        <position position="24"/>
    </location>
    <ligand>
        <name>5-amino-6-(D-ribitylamino)uracil</name>
        <dbReference type="ChEBI" id="CHEBI:15934"/>
    </ligand>
</feature>
<feature type="binding site" evidence="1">
    <location>
        <begin position="58"/>
        <end position="60"/>
    </location>
    <ligand>
        <name>5-amino-6-(D-ribitylamino)uracil</name>
        <dbReference type="ChEBI" id="CHEBI:15934"/>
    </ligand>
</feature>
<feature type="binding site" evidence="1">
    <location>
        <begin position="82"/>
        <end position="84"/>
    </location>
    <ligand>
        <name>5-amino-6-(D-ribitylamino)uracil</name>
        <dbReference type="ChEBI" id="CHEBI:15934"/>
    </ligand>
</feature>
<feature type="binding site" evidence="1">
    <location>
        <begin position="87"/>
        <end position="88"/>
    </location>
    <ligand>
        <name>(2S)-2-hydroxy-3-oxobutyl phosphate</name>
        <dbReference type="ChEBI" id="CHEBI:58830"/>
    </ligand>
</feature>
<feature type="binding site" evidence="1">
    <location>
        <position position="115"/>
    </location>
    <ligand>
        <name>5-amino-6-(D-ribitylamino)uracil</name>
        <dbReference type="ChEBI" id="CHEBI:15934"/>
    </ligand>
</feature>
<feature type="binding site" evidence="1">
    <location>
        <position position="129"/>
    </location>
    <ligand>
        <name>(2S)-2-hydroxy-3-oxobutyl phosphate</name>
        <dbReference type="ChEBI" id="CHEBI:58830"/>
    </ligand>
</feature>
<organism>
    <name type="scientific">Thermus thermophilus (strain ATCC BAA-163 / DSM 7039 / HB27)</name>
    <dbReference type="NCBI Taxonomy" id="262724"/>
    <lineage>
        <taxon>Bacteria</taxon>
        <taxon>Thermotogati</taxon>
        <taxon>Deinococcota</taxon>
        <taxon>Deinococci</taxon>
        <taxon>Thermales</taxon>
        <taxon>Thermaceae</taxon>
        <taxon>Thermus</taxon>
    </lineage>
</organism>
<reference key="1">
    <citation type="journal article" date="2004" name="Nat. Biotechnol.">
        <title>The genome sequence of the extreme thermophile Thermus thermophilus.</title>
        <authorList>
            <person name="Henne A."/>
            <person name="Brueggemann H."/>
            <person name="Raasch C."/>
            <person name="Wiezer A."/>
            <person name="Hartsch T."/>
            <person name="Liesegang H."/>
            <person name="Johann A."/>
            <person name="Lienard T."/>
            <person name="Gohl O."/>
            <person name="Martinez-Arias R."/>
            <person name="Jacobi C."/>
            <person name="Starkuviene V."/>
            <person name="Schlenczeck S."/>
            <person name="Dencker S."/>
            <person name="Huber R."/>
            <person name="Klenk H.-P."/>
            <person name="Kramer W."/>
            <person name="Merkl R."/>
            <person name="Gottschalk G."/>
            <person name="Fritz H.-J."/>
        </authorList>
    </citation>
    <scope>NUCLEOTIDE SEQUENCE [LARGE SCALE GENOMIC DNA]</scope>
    <source>
        <strain>ATCC BAA-163 / DSM 7039 / HB27</strain>
    </source>
</reference>
<sequence length="157" mass="16647">MKPKTLSPILTAKGVRLAIAVGRFNERVTKLLLEGALEAYARLGGDPAEVLVAWVPGSFELPLVAKRLAQRPDVDAVVALGAVIRGETPHFEYVAGQAASGLMQAMLQTEKPIVFGVLTTNTPEEAQERAGGKAGNKGAEAVFTAIEMVRLLEAISR</sequence>
<protein>
    <recommendedName>
        <fullName evidence="1">6,7-dimethyl-8-ribityllumazine synthase</fullName>
        <shortName evidence="1">DMRL synthase</shortName>
        <shortName evidence="1">LS</shortName>
        <shortName evidence="1">Lumazine synthase</shortName>
        <ecNumber evidence="1">2.5.1.78</ecNumber>
    </recommendedName>
</protein>
<name>RISB_THET2</name>
<gene>
    <name evidence="1" type="primary">ribH</name>
    <name type="ordered locus">TT_C1647</name>
</gene>
<dbReference type="EC" id="2.5.1.78" evidence="1"/>
<dbReference type="EMBL" id="AE017221">
    <property type="protein sequence ID" value="AAS81989.1"/>
    <property type="molecule type" value="Genomic_DNA"/>
</dbReference>
<dbReference type="RefSeq" id="WP_008634050.1">
    <property type="nucleotide sequence ID" value="NC_005835.1"/>
</dbReference>
<dbReference type="SMR" id="P61728"/>
<dbReference type="GeneID" id="3168665"/>
<dbReference type="KEGG" id="tth:TT_C1647"/>
<dbReference type="eggNOG" id="COG0054">
    <property type="taxonomic scope" value="Bacteria"/>
</dbReference>
<dbReference type="HOGENOM" id="CLU_089358_1_1_0"/>
<dbReference type="OrthoDB" id="9809709at2"/>
<dbReference type="UniPathway" id="UPA00275">
    <property type="reaction ID" value="UER00404"/>
</dbReference>
<dbReference type="Proteomes" id="UP000000592">
    <property type="component" value="Chromosome"/>
</dbReference>
<dbReference type="GO" id="GO:0009349">
    <property type="term" value="C:riboflavin synthase complex"/>
    <property type="evidence" value="ECO:0007669"/>
    <property type="project" value="InterPro"/>
</dbReference>
<dbReference type="GO" id="GO:0000906">
    <property type="term" value="F:6,7-dimethyl-8-ribityllumazine synthase activity"/>
    <property type="evidence" value="ECO:0007669"/>
    <property type="project" value="UniProtKB-UniRule"/>
</dbReference>
<dbReference type="GO" id="GO:0009231">
    <property type="term" value="P:riboflavin biosynthetic process"/>
    <property type="evidence" value="ECO:0007669"/>
    <property type="project" value="UniProtKB-UniRule"/>
</dbReference>
<dbReference type="CDD" id="cd09209">
    <property type="entry name" value="Lumazine_synthase-I"/>
    <property type="match status" value="1"/>
</dbReference>
<dbReference type="Gene3D" id="3.40.50.960">
    <property type="entry name" value="Lumazine/riboflavin synthase"/>
    <property type="match status" value="1"/>
</dbReference>
<dbReference type="HAMAP" id="MF_00178">
    <property type="entry name" value="Lumazine_synth"/>
    <property type="match status" value="1"/>
</dbReference>
<dbReference type="InterPro" id="IPR034964">
    <property type="entry name" value="LS"/>
</dbReference>
<dbReference type="InterPro" id="IPR002180">
    <property type="entry name" value="LS/RS"/>
</dbReference>
<dbReference type="InterPro" id="IPR036467">
    <property type="entry name" value="LS/RS_sf"/>
</dbReference>
<dbReference type="NCBIfam" id="TIGR00114">
    <property type="entry name" value="lumazine-synth"/>
    <property type="match status" value="1"/>
</dbReference>
<dbReference type="PANTHER" id="PTHR21058:SF0">
    <property type="entry name" value="6,7-DIMETHYL-8-RIBITYLLUMAZINE SYNTHASE"/>
    <property type="match status" value="1"/>
</dbReference>
<dbReference type="PANTHER" id="PTHR21058">
    <property type="entry name" value="6,7-DIMETHYL-8-RIBITYLLUMAZINE SYNTHASE DMRL SYNTHASE LUMAZINE SYNTHASE"/>
    <property type="match status" value="1"/>
</dbReference>
<dbReference type="Pfam" id="PF00885">
    <property type="entry name" value="DMRL_synthase"/>
    <property type="match status" value="1"/>
</dbReference>
<dbReference type="SUPFAM" id="SSF52121">
    <property type="entry name" value="Lumazine synthase"/>
    <property type="match status" value="1"/>
</dbReference>